<reference key="1">
    <citation type="journal article" date="1996" name="Science">
        <title>Complete genome sequence of the methanogenic archaeon, Methanococcus jannaschii.</title>
        <authorList>
            <person name="Bult C.J."/>
            <person name="White O."/>
            <person name="Olsen G.J."/>
            <person name="Zhou L."/>
            <person name="Fleischmann R.D."/>
            <person name="Sutton G.G."/>
            <person name="Blake J.A."/>
            <person name="FitzGerald L.M."/>
            <person name="Clayton R.A."/>
            <person name="Gocayne J.D."/>
            <person name="Kerlavage A.R."/>
            <person name="Dougherty B.A."/>
            <person name="Tomb J.-F."/>
            <person name="Adams M.D."/>
            <person name="Reich C.I."/>
            <person name="Overbeek R."/>
            <person name="Kirkness E.F."/>
            <person name="Weinstock K.G."/>
            <person name="Merrick J.M."/>
            <person name="Glodek A."/>
            <person name="Scott J.L."/>
            <person name="Geoghagen N.S.M."/>
            <person name="Weidman J.F."/>
            <person name="Fuhrmann J.L."/>
            <person name="Nguyen D."/>
            <person name="Utterback T.R."/>
            <person name="Kelley J.M."/>
            <person name="Peterson J.D."/>
            <person name="Sadow P.W."/>
            <person name="Hanna M.C."/>
            <person name="Cotton M.D."/>
            <person name="Roberts K.M."/>
            <person name="Hurst M.A."/>
            <person name="Kaine B.P."/>
            <person name="Borodovsky M."/>
            <person name="Klenk H.-P."/>
            <person name="Fraser C.M."/>
            <person name="Smith H.O."/>
            <person name="Woese C.R."/>
            <person name="Venter J.C."/>
        </authorList>
    </citation>
    <scope>NUCLEOTIDE SEQUENCE [LARGE SCALE GENOMIC DNA]</scope>
    <source>
        <strain>ATCC 43067 / DSM 2661 / JAL-1 / JCM 10045 / NBRC 100440</strain>
    </source>
</reference>
<dbReference type="EMBL" id="L77117">
    <property type="protein sequence ID" value="AAB97998.1"/>
    <property type="molecule type" value="Genomic_DNA"/>
</dbReference>
<dbReference type="PIR" id="A64301">
    <property type="entry name" value="A64301"/>
</dbReference>
<dbReference type="RefSeq" id="WP_010869502.1">
    <property type="nucleotide sequence ID" value="NC_000909.1"/>
</dbReference>
<dbReference type="SMR" id="Q60320"/>
<dbReference type="STRING" id="243232.MJ_0009"/>
<dbReference type="PaxDb" id="243232-MJ_0009"/>
<dbReference type="EnsemblBacteria" id="AAB97998">
    <property type="protein sequence ID" value="AAB97998"/>
    <property type="gene ID" value="MJ_0009"/>
</dbReference>
<dbReference type="GeneID" id="1450848"/>
<dbReference type="KEGG" id="mja:MJ_0009"/>
<dbReference type="eggNOG" id="arCOG05016">
    <property type="taxonomic scope" value="Archaea"/>
</dbReference>
<dbReference type="HOGENOM" id="CLU_1040553_0_0_2"/>
<dbReference type="InParanoid" id="Q60320"/>
<dbReference type="OrthoDB" id="60256at2157"/>
<dbReference type="Proteomes" id="UP000000805">
    <property type="component" value="Chromosome"/>
</dbReference>
<keyword id="KW-1185">Reference proteome</keyword>
<name>Y009_METJA</name>
<gene>
    <name type="ordered locus">MJ0009</name>
</gene>
<protein>
    <recommendedName>
        <fullName>Uncharacterized protein MJ0009</fullName>
    </recommendedName>
</protein>
<sequence>MIFNENTPNFIDFKESFKELPLSDETFKIIEENGIKLREIAIGEFSGRDSVAAIIKAIEEGIDFVLPVVAFTGTDYGNINIFYKNWEIVNKRIKEIDKDKILLPLHFMFEPKLWNALNGRWVVLSFKRYGYYRPCIGCHAYLRIIRIPLAKHLGGKIISGERLYHNGDFKIDQIEEVLNVYSKICRDFDVELILPIRYIREGKKIKEIIGEEWEQGEKQFSCVFSGNYRDKDGKVIFDKEGILKMLNEFIYPASVEILKEGYKGNFNYLNIVKKLI</sequence>
<accession>Q60320</accession>
<feature type="chain" id="PRO_0000106650" description="Uncharacterized protein MJ0009">
    <location>
        <begin position="1"/>
        <end position="276"/>
    </location>
</feature>
<proteinExistence type="predicted"/>
<organism>
    <name type="scientific">Methanocaldococcus jannaschii (strain ATCC 43067 / DSM 2661 / JAL-1 / JCM 10045 / NBRC 100440)</name>
    <name type="common">Methanococcus jannaschii</name>
    <dbReference type="NCBI Taxonomy" id="243232"/>
    <lineage>
        <taxon>Archaea</taxon>
        <taxon>Methanobacteriati</taxon>
        <taxon>Methanobacteriota</taxon>
        <taxon>Methanomada group</taxon>
        <taxon>Methanococci</taxon>
        <taxon>Methanococcales</taxon>
        <taxon>Methanocaldococcaceae</taxon>
        <taxon>Methanocaldococcus</taxon>
    </lineage>
</organism>